<feature type="signal peptide" evidence="5">
    <location>
        <begin position="1"/>
        <end position="21"/>
    </location>
</feature>
<feature type="chain" id="PRO_0000002357" description="Probable L-asparaginase periplasmic">
    <location>
        <begin position="22"/>
        <end position="349"/>
    </location>
</feature>
<feature type="domain" description="Asparaginase/glutaminase" evidence="2">
    <location>
        <begin position="25"/>
        <end position="349"/>
    </location>
</feature>
<feature type="active site" description="O-isoaspartyl threonine intermediate" evidence="3 4">
    <location>
        <position position="35"/>
    </location>
</feature>
<feature type="binding site" evidence="1">
    <location>
        <position position="81"/>
    </location>
    <ligand>
        <name>substrate</name>
    </ligand>
</feature>
<feature type="binding site" evidence="1">
    <location>
        <begin position="112"/>
        <end position="113"/>
    </location>
    <ligand>
        <name>substrate</name>
    </ligand>
</feature>
<feature type="disulfide bond" evidence="1">
    <location>
        <begin position="100"/>
        <end position="128"/>
    </location>
</feature>
<organism>
    <name type="scientific">Haemophilus influenzae (strain ATCC 51907 / DSM 11121 / KW20 / Rd)</name>
    <dbReference type="NCBI Taxonomy" id="71421"/>
    <lineage>
        <taxon>Bacteria</taxon>
        <taxon>Pseudomonadati</taxon>
        <taxon>Pseudomonadota</taxon>
        <taxon>Gammaproteobacteria</taxon>
        <taxon>Pasteurellales</taxon>
        <taxon>Pasteurellaceae</taxon>
        <taxon>Haemophilus</taxon>
    </lineage>
</organism>
<dbReference type="EC" id="3.5.1.1"/>
<dbReference type="EMBL" id="L42023">
    <property type="protein sequence ID" value="AAC22403.1"/>
    <property type="molecule type" value="Genomic_DNA"/>
</dbReference>
<dbReference type="PIR" id="A64090">
    <property type="entry name" value="A64090"/>
</dbReference>
<dbReference type="RefSeq" id="NP_438904.1">
    <property type="nucleotide sequence ID" value="NC_000907.1"/>
</dbReference>
<dbReference type="SMR" id="P43843"/>
<dbReference type="STRING" id="71421.HI_0745"/>
<dbReference type="EnsemblBacteria" id="AAC22403">
    <property type="protein sequence ID" value="AAC22403"/>
    <property type="gene ID" value="HI_0745"/>
</dbReference>
<dbReference type="KEGG" id="hin:HI_0745"/>
<dbReference type="PATRIC" id="fig|71421.8.peg.782"/>
<dbReference type="eggNOG" id="COG0252">
    <property type="taxonomic scope" value="Bacteria"/>
</dbReference>
<dbReference type="HOGENOM" id="CLU_019134_1_2_6"/>
<dbReference type="OrthoDB" id="9788068at2"/>
<dbReference type="PhylomeDB" id="P43843"/>
<dbReference type="BioCyc" id="HINF71421:G1GJ1-783-MONOMER"/>
<dbReference type="Proteomes" id="UP000000579">
    <property type="component" value="Chromosome"/>
</dbReference>
<dbReference type="GO" id="GO:0042597">
    <property type="term" value="C:periplasmic space"/>
    <property type="evidence" value="ECO:0000318"/>
    <property type="project" value="GO_Central"/>
</dbReference>
<dbReference type="GO" id="GO:0004067">
    <property type="term" value="F:asparaginase activity"/>
    <property type="evidence" value="ECO:0000318"/>
    <property type="project" value="GO_Central"/>
</dbReference>
<dbReference type="GO" id="GO:0006530">
    <property type="term" value="P:asparagine catabolic process"/>
    <property type="evidence" value="ECO:0000318"/>
    <property type="project" value="GO_Central"/>
</dbReference>
<dbReference type="CDD" id="cd08964">
    <property type="entry name" value="L-asparaginase_II"/>
    <property type="match status" value="1"/>
</dbReference>
<dbReference type="FunFam" id="3.40.50.1170:FF:000001">
    <property type="entry name" value="L-asparaginase 2"/>
    <property type="match status" value="1"/>
</dbReference>
<dbReference type="FunFam" id="3.40.50.40:FF:000002">
    <property type="entry name" value="L-asparaginase 2"/>
    <property type="match status" value="1"/>
</dbReference>
<dbReference type="Gene3D" id="3.40.50.40">
    <property type="match status" value="1"/>
</dbReference>
<dbReference type="Gene3D" id="3.40.50.1170">
    <property type="entry name" value="L-asparaginase, N-terminal domain"/>
    <property type="match status" value="1"/>
</dbReference>
<dbReference type="InterPro" id="IPR004550">
    <property type="entry name" value="AsnASE_II"/>
</dbReference>
<dbReference type="InterPro" id="IPR036152">
    <property type="entry name" value="Asp/glu_Ase-like_sf"/>
</dbReference>
<dbReference type="InterPro" id="IPR006034">
    <property type="entry name" value="Asparaginase/glutaminase-like"/>
</dbReference>
<dbReference type="InterPro" id="IPR020827">
    <property type="entry name" value="Asparaginase/glutaminase_AS1"/>
</dbReference>
<dbReference type="InterPro" id="IPR027475">
    <property type="entry name" value="Asparaginase/glutaminase_AS2"/>
</dbReference>
<dbReference type="InterPro" id="IPR040919">
    <property type="entry name" value="Asparaginase_C"/>
</dbReference>
<dbReference type="InterPro" id="IPR027473">
    <property type="entry name" value="L-asparaginase_C"/>
</dbReference>
<dbReference type="InterPro" id="IPR027474">
    <property type="entry name" value="L-asparaginase_N"/>
</dbReference>
<dbReference type="InterPro" id="IPR037152">
    <property type="entry name" value="L-asparaginase_N_sf"/>
</dbReference>
<dbReference type="NCBIfam" id="TIGR00520">
    <property type="entry name" value="asnASE_II"/>
    <property type="match status" value="1"/>
</dbReference>
<dbReference type="NCBIfam" id="NF008304">
    <property type="entry name" value="PRK11096.1"/>
    <property type="match status" value="1"/>
</dbReference>
<dbReference type="PANTHER" id="PTHR11707:SF28">
    <property type="entry name" value="60 KDA LYSOPHOSPHOLIPASE"/>
    <property type="match status" value="1"/>
</dbReference>
<dbReference type="PANTHER" id="PTHR11707">
    <property type="entry name" value="L-ASPARAGINASE"/>
    <property type="match status" value="1"/>
</dbReference>
<dbReference type="Pfam" id="PF00710">
    <property type="entry name" value="Asparaginase"/>
    <property type="match status" value="1"/>
</dbReference>
<dbReference type="Pfam" id="PF17763">
    <property type="entry name" value="Asparaginase_C"/>
    <property type="match status" value="1"/>
</dbReference>
<dbReference type="PIRSF" id="PIRSF001220">
    <property type="entry name" value="L-ASNase_gatD"/>
    <property type="match status" value="1"/>
</dbReference>
<dbReference type="PIRSF" id="PIRSF500176">
    <property type="entry name" value="L_ASNase"/>
    <property type="match status" value="1"/>
</dbReference>
<dbReference type="PRINTS" id="PR00139">
    <property type="entry name" value="ASNGLNASE"/>
</dbReference>
<dbReference type="SMART" id="SM00870">
    <property type="entry name" value="Asparaginase"/>
    <property type="match status" value="1"/>
</dbReference>
<dbReference type="SUPFAM" id="SSF53774">
    <property type="entry name" value="Glutaminase/Asparaginase"/>
    <property type="match status" value="1"/>
</dbReference>
<dbReference type="PROSITE" id="PS00144">
    <property type="entry name" value="ASN_GLN_ASE_1"/>
    <property type="match status" value="1"/>
</dbReference>
<dbReference type="PROSITE" id="PS00917">
    <property type="entry name" value="ASN_GLN_ASE_2"/>
    <property type="match status" value="1"/>
</dbReference>
<dbReference type="PROSITE" id="PS51732">
    <property type="entry name" value="ASN_GLN_ASE_3"/>
    <property type="match status" value="1"/>
</dbReference>
<gene>
    <name type="primary">ansB</name>
    <name type="ordered locus">HI_0745</name>
</gene>
<sequence>MKLTKLALCTLFGLGVSIANAADLPNITILATGGTIAGSGQSSVNSAYKAGQLSIDTLIEAVPEMKNIANIKGEQIVKIGSQDMNDEVWLKLAKAINAQCKSTDGFVITHGTDTMEETAYFLDLTVKCEKPVVLVGAMRPATEKSADGPLNLYNAVVVAADKKSSGRGVLVAMNNEVLGARDVTKTSTTAVQTFHSPNYGSLGYIHNSKVDYERSPESKHTINTPFNVEKLDSLPKVGIIYAYSNAPVEPLNALLNAGYQGIVSAGVGNGNVNAAHLDRLEKAAKDSVVVVRSSRVPTGYTTRDAEVDDSKYGFVASGTLNPQKARVLLQLALTQTKDPKVIQQYFEDF</sequence>
<keyword id="KW-0903">Direct protein sequencing</keyword>
<keyword id="KW-1015">Disulfide bond</keyword>
<keyword id="KW-0378">Hydrolase</keyword>
<keyword id="KW-0574">Periplasm</keyword>
<keyword id="KW-1185">Reference proteome</keyword>
<keyword id="KW-0732">Signal</keyword>
<proteinExistence type="evidence at protein level"/>
<comment type="catalytic activity">
    <reaction>
        <text>L-asparagine + H2O = L-aspartate + NH4(+)</text>
        <dbReference type="Rhea" id="RHEA:21016"/>
        <dbReference type="ChEBI" id="CHEBI:15377"/>
        <dbReference type="ChEBI" id="CHEBI:28938"/>
        <dbReference type="ChEBI" id="CHEBI:29991"/>
        <dbReference type="ChEBI" id="CHEBI:58048"/>
        <dbReference type="EC" id="3.5.1.1"/>
    </reaction>
</comment>
<comment type="subcellular location">
    <subcellularLocation>
        <location evidence="1">Periplasm</location>
    </subcellularLocation>
</comment>
<comment type="similarity">
    <text evidence="6">Belongs to the asparaginase 1 family.</text>
</comment>
<reference key="1">
    <citation type="journal article" date="1995" name="Science">
        <title>Whole-genome random sequencing and assembly of Haemophilus influenzae Rd.</title>
        <authorList>
            <person name="Fleischmann R.D."/>
            <person name="Adams M.D."/>
            <person name="White O."/>
            <person name="Clayton R.A."/>
            <person name="Kirkness E.F."/>
            <person name="Kerlavage A.R."/>
            <person name="Bult C.J."/>
            <person name="Tomb J.-F."/>
            <person name="Dougherty B.A."/>
            <person name="Merrick J.M."/>
            <person name="McKenney K."/>
            <person name="Sutton G.G."/>
            <person name="FitzHugh W."/>
            <person name="Fields C.A."/>
            <person name="Gocayne J.D."/>
            <person name="Scott J.D."/>
            <person name="Shirley R."/>
            <person name="Liu L.-I."/>
            <person name="Glodek A."/>
            <person name="Kelley J.M."/>
            <person name="Weidman J.F."/>
            <person name="Phillips C.A."/>
            <person name="Spriggs T."/>
            <person name="Hedblom E."/>
            <person name="Cotton M.D."/>
            <person name="Utterback T.R."/>
            <person name="Hanna M.C."/>
            <person name="Nguyen D.T."/>
            <person name="Saudek D.M."/>
            <person name="Brandon R.C."/>
            <person name="Fine L.D."/>
            <person name="Fritchman J.L."/>
            <person name="Fuhrmann J.L."/>
            <person name="Geoghagen N.S.M."/>
            <person name="Gnehm C.L."/>
            <person name="McDonald L.A."/>
            <person name="Small K.V."/>
            <person name="Fraser C.M."/>
            <person name="Smith H.O."/>
            <person name="Venter J.C."/>
        </authorList>
    </citation>
    <scope>NUCLEOTIDE SEQUENCE [LARGE SCALE GENOMIC DNA]</scope>
    <source>
        <strain>ATCC 51907 / DSM 11121 / KW20 / Rd</strain>
    </source>
</reference>
<reference key="2">
    <citation type="journal article" date="2000" name="Electrophoresis">
        <title>Two-dimensional map of the proteome of Haemophilus influenzae.</title>
        <authorList>
            <person name="Langen H."/>
            <person name="Takacs B."/>
            <person name="Evers S."/>
            <person name="Berndt P."/>
            <person name="Lahm H.W."/>
            <person name="Wipf B."/>
            <person name="Gray C."/>
            <person name="Fountoulakis M."/>
        </authorList>
    </citation>
    <scope>PROTEIN SEQUENCE OF 22-26</scope>
    <source>
        <strain>ATCC 51907 / DSM 11121 / KW20 / Rd</strain>
    </source>
</reference>
<protein>
    <recommendedName>
        <fullName>Probable L-asparaginase periplasmic</fullName>
        <shortName>L-ASNase</shortName>
        <ecNumber>3.5.1.1</ecNumber>
    </recommendedName>
    <alternativeName>
        <fullName>L-asparagine amidohydrolase</fullName>
    </alternativeName>
</protein>
<name>ASPG2_HAEIN</name>
<evidence type="ECO:0000250" key="1"/>
<evidence type="ECO:0000255" key="2">
    <source>
        <dbReference type="PROSITE-ProRule" id="PRU01068"/>
    </source>
</evidence>
<evidence type="ECO:0000255" key="3">
    <source>
        <dbReference type="PROSITE-ProRule" id="PRU10099"/>
    </source>
</evidence>
<evidence type="ECO:0000255" key="4">
    <source>
        <dbReference type="PROSITE-ProRule" id="PRU10100"/>
    </source>
</evidence>
<evidence type="ECO:0000269" key="5">
    <source>
    </source>
</evidence>
<evidence type="ECO:0000305" key="6"/>
<accession>P43843</accession>